<accession>P0C1B6</accession>
<comment type="function">
    <text evidence="1">Beta toxins bind voltage-independently at site-4 of sodium channels (Nav) and shift the voltage of activation toward more negative potentials thereby affecting sodium channel activation and promoting spontaneous and repetitive firing (By similarity). In mice, causes intense writhing.</text>
</comment>
<comment type="subcellular location">
    <subcellularLocation>
        <location>Secreted</location>
    </subcellularLocation>
</comment>
<comment type="tissue specificity">
    <text>Expressed by the venom gland.</text>
</comment>
<comment type="domain">
    <text evidence="4">Has the structural arrangement of an alpha-helix connected to antiparallel beta-sheets by disulfide bonds (CS-alpha/beta).</text>
</comment>
<comment type="mass spectrometry"/>
<comment type="similarity">
    <text evidence="4">Belongs to the long (3 C-C) scorpion toxin superfamily. Sodium channel inhibitor family. Beta subfamily.</text>
</comment>
<evidence type="ECO:0000250" key="1"/>
<evidence type="ECO:0000255" key="2">
    <source>
        <dbReference type="PROSITE-ProRule" id="PRU01210"/>
    </source>
</evidence>
<evidence type="ECO:0000269" key="3">
    <source>
    </source>
</evidence>
<evidence type="ECO:0000305" key="4"/>
<keyword id="KW-0903">Direct protein sequencing</keyword>
<keyword id="KW-1015">Disulfide bond</keyword>
<keyword id="KW-0872">Ion channel impairing toxin</keyword>
<keyword id="KW-0528">Neurotoxin</keyword>
<keyword id="KW-0964">Secreted</keyword>
<keyword id="KW-0800">Toxin</keyword>
<keyword id="KW-0738">Voltage-gated sodium channel impairing toxin</keyword>
<feature type="chain" id="PRO_0000233629" description="Bestoxin">
    <location>
        <begin position="1"/>
        <end position="58"/>
    </location>
</feature>
<feature type="domain" description="LCN-type CS-alpha/beta" evidence="2">
    <location>
        <begin position="3"/>
        <end position="58"/>
    </location>
</feature>
<feature type="disulfide bond" evidence="2">
    <location>
        <begin position="18"/>
        <end position="41"/>
    </location>
</feature>
<feature type="disulfide bond" evidence="2">
    <location>
        <begin position="27"/>
        <end position="46"/>
    </location>
</feature>
<feature type="disulfide bond" evidence="2">
    <location>
        <begin position="31"/>
        <end position="48"/>
    </location>
</feature>
<name>BEST_PARTR</name>
<sequence>ADVPGNYPLDKDGNTYTCLELGENKDCQKVCKLHGVQYGYCYAFSCWCKEYLDDKDSV</sequence>
<protein>
    <recommendedName>
        <fullName>Bestoxin</fullName>
    </recommendedName>
</protein>
<dbReference type="SMR" id="P0C1B6"/>
<dbReference type="GO" id="GO:0005576">
    <property type="term" value="C:extracellular region"/>
    <property type="evidence" value="ECO:0007669"/>
    <property type="project" value="UniProtKB-SubCell"/>
</dbReference>
<dbReference type="GO" id="GO:0019871">
    <property type="term" value="F:sodium channel inhibitor activity"/>
    <property type="evidence" value="ECO:0007669"/>
    <property type="project" value="InterPro"/>
</dbReference>
<dbReference type="GO" id="GO:0090729">
    <property type="term" value="F:toxin activity"/>
    <property type="evidence" value="ECO:0007669"/>
    <property type="project" value="UniProtKB-KW"/>
</dbReference>
<dbReference type="CDD" id="cd23106">
    <property type="entry name" value="neurotoxins_LC_scorpion"/>
    <property type="match status" value="1"/>
</dbReference>
<dbReference type="Gene3D" id="3.30.30.10">
    <property type="entry name" value="Knottin, scorpion toxin-like"/>
    <property type="match status" value="1"/>
</dbReference>
<dbReference type="InterPro" id="IPR044062">
    <property type="entry name" value="LCN-type_CS_alpha_beta_dom"/>
</dbReference>
<dbReference type="InterPro" id="IPR036574">
    <property type="entry name" value="Scorpion_toxin-like_sf"/>
</dbReference>
<dbReference type="InterPro" id="IPR002061">
    <property type="entry name" value="Scorpion_toxinL/defensin"/>
</dbReference>
<dbReference type="Pfam" id="PF00537">
    <property type="entry name" value="Toxin_3"/>
    <property type="match status" value="1"/>
</dbReference>
<dbReference type="SUPFAM" id="SSF57095">
    <property type="entry name" value="Scorpion toxin-like"/>
    <property type="match status" value="1"/>
</dbReference>
<dbReference type="PROSITE" id="PS51863">
    <property type="entry name" value="LCN_CSAB"/>
    <property type="match status" value="1"/>
</dbReference>
<organism>
    <name type="scientific">Parabuthus transvaalicus</name>
    <name type="common">Transvaal thick-tailed scorpion</name>
    <dbReference type="NCBI Taxonomy" id="170972"/>
    <lineage>
        <taxon>Eukaryota</taxon>
        <taxon>Metazoa</taxon>
        <taxon>Ecdysozoa</taxon>
        <taxon>Arthropoda</taxon>
        <taxon>Chelicerata</taxon>
        <taxon>Arachnida</taxon>
        <taxon>Scorpiones</taxon>
        <taxon>Buthida</taxon>
        <taxon>Buthoidea</taxon>
        <taxon>Buthidae</taxon>
        <taxon>Parabuthus</taxon>
    </lineage>
</organism>
<proteinExistence type="evidence at protein level"/>
<reference key="1">
    <citation type="journal article" date="2005" name="Toxicon">
        <title>Three structurally related, highly potent, peptides from the venom of Parabuthus transvaalicus possess divergent biological activity.</title>
        <authorList>
            <person name="Inceoglu A.B."/>
            <person name="Lango J."/>
            <person name="Pessah I.N."/>
            <person name="Hammock B.D."/>
        </authorList>
    </citation>
    <scope>PROTEIN SEQUENCE</scope>
    <scope>MASS SPECTROMETRY</scope>
    <source>
        <tissue>Venom</tissue>
    </source>
</reference>